<evidence type="ECO:0000255" key="1">
    <source>
        <dbReference type="HAMAP-Rule" id="MF_01682"/>
    </source>
</evidence>
<keyword id="KW-0028">Amino-acid biosynthesis</keyword>
<keyword id="KW-0223">Dioxygenase</keyword>
<keyword id="KW-0408">Iron</keyword>
<keyword id="KW-0479">Metal-binding</keyword>
<keyword id="KW-0486">Methionine biosynthesis</keyword>
<keyword id="KW-0533">Nickel</keyword>
<keyword id="KW-0560">Oxidoreductase</keyword>
<keyword id="KW-1185">Reference proteome</keyword>
<name>MTND_BACLD</name>
<reference key="1">
    <citation type="journal article" date="2004" name="J. Mol. Microbiol. Biotechnol.">
        <title>The complete genome sequence of Bacillus licheniformis DSM13, an organism with great industrial potential.</title>
        <authorList>
            <person name="Veith B."/>
            <person name="Herzberg C."/>
            <person name="Steckel S."/>
            <person name="Feesche J."/>
            <person name="Maurer K.H."/>
            <person name="Ehrenreich P."/>
            <person name="Baeumer S."/>
            <person name="Henne A."/>
            <person name="Liesegang H."/>
            <person name="Merkl R."/>
            <person name="Ehrenreich A."/>
            <person name="Gottschalk G."/>
        </authorList>
    </citation>
    <scope>NUCLEOTIDE SEQUENCE [LARGE SCALE GENOMIC DNA]</scope>
    <source>
        <strain>ATCC 14580 / DSM 13 / JCM 2505 / CCUG 7422 / NBRC 12200 / NCIMB 9375 / NCTC 10341 / NRRL NRS-1264 / Gibson 46</strain>
    </source>
</reference>
<reference key="2">
    <citation type="journal article" date="2004" name="Genome Biol.">
        <title>Complete genome sequence of the industrial bacterium Bacillus licheniformis and comparisons with closely related Bacillus species.</title>
        <authorList>
            <person name="Rey M.W."/>
            <person name="Ramaiya P."/>
            <person name="Nelson B.A."/>
            <person name="Brody-Karpin S.D."/>
            <person name="Zaretsky E.J."/>
            <person name="Tang M."/>
            <person name="Lopez de Leon A."/>
            <person name="Xiang H."/>
            <person name="Gusti V."/>
            <person name="Clausen I.G."/>
            <person name="Olsen P.B."/>
            <person name="Rasmussen M.D."/>
            <person name="Andersen J.T."/>
            <person name="Joergensen P.L."/>
            <person name="Larsen T.S."/>
            <person name="Sorokin A."/>
            <person name="Bolotin A."/>
            <person name="Lapidus A."/>
            <person name="Galleron N."/>
            <person name="Ehrlich S.D."/>
            <person name="Berka R.M."/>
        </authorList>
    </citation>
    <scope>NUCLEOTIDE SEQUENCE [LARGE SCALE GENOMIC DNA]</scope>
    <source>
        <strain>ATCC 14580 / DSM 13 / JCM 2505 / CCUG 7422 / NBRC 12200 / NCIMB 9375 / NCTC 10341 / NRRL NRS-1264 / Gibson 46</strain>
    </source>
</reference>
<sequence>MATIRIHDEQNTSIENQEEVEQFLKRQEVIYEKWDITKLPAGLKEKYDLTDEEKQEILDVFAAEIKDISERRGYKASDVISLSDQNPKLDELLKNFKQEHHHTDDEVRFIVSGHGIFAIEGKDGTFFDVLLNPGDLISVPENTRHYFTLQEDRKVVAVRIFVTTEGWVPIYEKENVNQS</sequence>
<accession>Q65KJ6</accession>
<accession>Q62VZ4</accession>
<proteinExistence type="inferred from homology"/>
<organism>
    <name type="scientific">Bacillus licheniformis (strain ATCC 14580 / DSM 13 / JCM 2505 / CCUG 7422 / NBRC 12200 / NCIMB 9375 / NCTC 10341 / NRRL NRS-1264 / Gibson 46)</name>
    <dbReference type="NCBI Taxonomy" id="279010"/>
    <lineage>
        <taxon>Bacteria</taxon>
        <taxon>Bacillati</taxon>
        <taxon>Bacillota</taxon>
        <taxon>Bacilli</taxon>
        <taxon>Bacillales</taxon>
        <taxon>Bacillaceae</taxon>
        <taxon>Bacillus</taxon>
    </lineage>
</organism>
<feature type="chain" id="PRO_0000359177" description="Acireductone dioxygenase">
    <location>
        <begin position="1"/>
        <end position="179"/>
    </location>
</feature>
<feature type="binding site" evidence="1">
    <location>
        <position position="100"/>
    </location>
    <ligand>
        <name>Fe(2+)</name>
        <dbReference type="ChEBI" id="CHEBI:29033"/>
    </ligand>
</feature>
<feature type="binding site" evidence="1">
    <location>
        <position position="100"/>
    </location>
    <ligand>
        <name>Ni(2+)</name>
        <dbReference type="ChEBI" id="CHEBI:49786"/>
    </ligand>
</feature>
<feature type="binding site" evidence="1">
    <location>
        <position position="102"/>
    </location>
    <ligand>
        <name>Fe(2+)</name>
        <dbReference type="ChEBI" id="CHEBI:29033"/>
    </ligand>
</feature>
<feature type="binding site" evidence="1">
    <location>
        <position position="102"/>
    </location>
    <ligand>
        <name>Ni(2+)</name>
        <dbReference type="ChEBI" id="CHEBI:49786"/>
    </ligand>
</feature>
<feature type="binding site" evidence="1">
    <location>
        <position position="106"/>
    </location>
    <ligand>
        <name>Fe(2+)</name>
        <dbReference type="ChEBI" id="CHEBI:29033"/>
    </ligand>
</feature>
<feature type="binding site" evidence="1">
    <location>
        <position position="106"/>
    </location>
    <ligand>
        <name>Ni(2+)</name>
        <dbReference type="ChEBI" id="CHEBI:49786"/>
    </ligand>
</feature>
<feature type="binding site" evidence="1">
    <location>
        <position position="145"/>
    </location>
    <ligand>
        <name>Fe(2+)</name>
        <dbReference type="ChEBI" id="CHEBI:29033"/>
    </ligand>
</feature>
<feature type="binding site" evidence="1">
    <location>
        <position position="145"/>
    </location>
    <ligand>
        <name>Ni(2+)</name>
        <dbReference type="ChEBI" id="CHEBI:49786"/>
    </ligand>
</feature>
<feature type="site" description="May play a role in metal incorporation in vivo" evidence="1">
    <location>
        <position position="99"/>
    </location>
</feature>
<feature type="site" description="May play a role in transmitting local conformational changes" evidence="1">
    <location>
        <position position="105"/>
    </location>
</feature>
<feature type="site" description="Important to generate the dianion" evidence="1">
    <location>
        <position position="108"/>
    </location>
</feature>
<protein>
    <recommendedName>
        <fullName evidence="1">Acireductone dioxygenase</fullName>
    </recommendedName>
    <alternativeName>
        <fullName evidence="1">1,2-dihydroxy-3-keto-5-methylthiopentene dioxygenase</fullName>
        <shortName evidence="1">DHK-MTPene dioxygenase</shortName>
    </alternativeName>
    <alternativeName>
        <fullName evidence="1">Acireductone dioxygenase (Fe(2+)-requiring)</fullName>
        <shortName evidence="1">ARD'</shortName>
        <shortName evidence="1">Fe-ARD</shortName>
        <ecNumber evidence="1">1.13.11.54</ecNumber>
    </alternativeName>
    <alternativeName>
        <fullName evidence="1">Acireductone dioxygenase (Ni(2+)-requiring)</fullName>
        <shortName evidence="1">ARD</shortName>
        <shortName evidence="1">Ni-ARD</shortName>
        <ecNumber evidence="1">1.13.11.53</ecNumber>
    </alternativeName>
</protein>
<dbReference type="EC" id="1.13.11.54" evidence="1"/>
<dbReference type="EC" id="1.13.11.53" evidence="1"/>
<dbReference type="EMBL" id="CP000002">
    <property type="protein sequence ID" value="AAU23064.1"/>
    <property type="molecule type" value="Genomic_DNA"/>
</dbReference>
<dbReference type="EMBL" id="AE017333">
    <property type="protein sequence ID" value="AAU40418.1"/>
    <property type="molecule type" value="Genomic_DNA"/>
</dbReference>
<dbReference type="RefSeq" id="WP_011197890.1">
    <property type="nucleotide sequence ID" value="NC_006322.1"/>
</dbReference>
<dbReference type="SMR" id="Q65KJ6"/>
<dbReference type="STRING" id="279010.BL03542"/>
<dbReference type="KEGG" id="bld:BLi01517"/>
<dbReference type="KEGG" id="bli:BL03542"/>
<dbReference type="PATRIC" id="fig|279010.13.peg.1511"/>
<dbReference type="eggNOG" id="COG1791">
    <property type="taxonomic scope" value="Bacteria"/>
</dbReference>
<dbReference type="HOGENOM" id="CLU_125400_0_0_9"/>
<dbReference type="UniPathway" id="UPA00904">
    <property type="reaction ID" value="UER00878"/>
</dbReference>
<dbReference type="Proteomes" id="UP000000606">
    <property type="component" value="Chromosome"/>
</dbReference>
<dbReference type="GO" id="GO:0010308">
    <property type="term" value="F:acireductone dioxygenase (Ni2+-requiring) activity"/>
    <property type="evidence" value="ECO:0007669"/>
    <property type="project" value="UniProtKB-UniRule"/>
</dbReference>
<dbReference type="GO" id="GO:0010309">
    <property type="term" value="F:acireductone dioxygenase [iron(II)-requiring] activity"/>
    <property type="evidence" value="ECO:0007669"/>
    <property type="project" value="UniProtKB-UniRule"/>
</dbReference>
<dbReference type="GO" id="GO:0005506">
    <property type="term" value="F:iron ion binding"/>
    <property type="evidence" value="ECO:0007669"/>
    <property type="project" value="UniProtKB-UniRule"/>
</dbReference>
<dbReference type="GO" id="GO:0016151">
    <property type="term" value="F:nickel cation binding"/>
    <property type="evidence" value="ECO:0007669"/>
    <property type="project" value="UniProtKB-UniRule"/>
</dbReference>
<dbReference type="GO" id="GO:0019509">
    <property type="term" value="P:L-methionine salvage from methylthioadenosine"/>
    <property type="evidence" value="ECO:0007669"/>
    <property type="project" value="UniProtKB-UniRule"/>
</dbReference>
<dbReference type="GO" id="GO:0019284">
    <property type="term" value="P:L-methionine salvage from S-adenosylmethionine"/>
    <property type="evidence" value="ECO:0007669"/>
    <property type="project" value="InterPro"/>
</dbReference>
<dbReference type="CDD" id="cd02232">
    <property type="entry name" value="cupin_ARD"/>
    <property type="match status" value="1"/>
</dbReference>
<dbReference type="FunFam" id="2.60.120.10:FF:000056">
    <property type="entry name" value="Acireductone dioxygenase"/>
    <property type="match status" value="1"/>
</dbReference>
<dbReference type="Gene3D" id="2.60.120.10">
    <property type="entry name" value="Jelly Rolls"/>
    <property type="match status" value="1"/>
</dbReference>
<dbReference type="HAMAP" id="MF_01682">
    <property type="entry name" value="Salvage_MtnD"/>
    <property type="match status" value="1"/>
</dbReference>
<dbReference type="InterPro" id="IPR004313">
    <property type="entry name" value="ARD"/>
</dbReference>
<dbReference type="InterPro" id="IPR023956">
    <property type="entry name" value="ARD_bac"/>
</dbReference>
<dbReference type="InterPro" id="IPR014710">
    <property type="entry name" value="RmlC-like_jellyroll"/>
</dbReference>
<dbReference type="InterPro" id="IPR011051">
    <property type="entry name" value="RmlC_Cupin_sf"/>
</dbReference>
<dbReference type="PANTHER" id="PTHR23418">
    <property type="entry name" value="ACIREDUCTONE DIOXYGENASE"/>
    <property type="match status" value="1"/>
</dbReference>
<dbReference type="PANTHER" id="PTHR23418:SF0">
    <property type="entry name" value="ACIREDUCTONE DIOXYGENASE"/>
    <property type="match status" value="1"/>
</dbReference>
<dbReference type="Pfam" id="PF03079">
    <property type="entry name" value="ARD"/>
    <property type="match status" value="1"/>
</dbReference>
<dbReference type="SUPFAM" id="SSF51182">
    <property type="entry name" value="RmlC-like cupins"/>
    <property type="match status" value="1"/>
</dbReference>
<comment type="function">
    <text evidence="1">Catalyzes 2 different reactions between oxygen and the acireductone 1,2-dihydroxy-3-keto-5-methylthiopentene (DHK-MTPene) depending upon the metal bound in the active site. Fe-containing acireductone dioxygenase (Fe-ARD) produces formate and 2-keto-4-methylthiobutyrate (KMTB), the alpha-ketoacid precursor of methionine in the methionine recycle pathway. Ni-containing acireductone dioxygenase (Ni-ARD) produces methylthiopropionate, carbon monoxide and formate, and does not lie on the methionine recycle pathway.</text>
</comment>
<comment type="catalytic activity">
    <reaction evidence="1">
        <text>1,2-dihydroxy-5-(methylsulfanyl)pent-1-en-3-one + O2 = 3-(methylsulfanyl)propanoate + CO + formate + 2 H(+)</text>
        <dbReference type="Rhea" id="RHEA:14161"/>
        <dbReference type="ChEBI" id="CHEBI:15378"/>
        <dbReference type="ChEBI" id="CHEBI:15379"/>
        <dbReference type="ChEBI" id="CHEBI:15740"/>
        <dbReference type="ChEBI" id="CHEBI:17245"/>
        <dbReference type="ChEBI" id="CHEBI:49016"/>
        <dbReference type="ChEBI" id="CHEBI:49252"/>
        <dbReference type="EC" id="1.13.11.53"/>
    </reaction>
</comment>
<comment type="catalytic activity">
    <reaction evidence="1">
        <text>1,2-dihydroxy-5-(methylsulfanyl)pent-1-en-3-one + O2 = 4-methylsulfanyl-2-oxobutanoate + formate + 2 H(+)</text>
        <dbReference type="Rhea" id="RHEA:24504"/>
        <dbReference type="ChEBI" id="CHEBI:15378"/>
        <dbReference type="ChEBI" id="CHEBI:15379"/>
        <dbReference type="ChEBI" id="CHEBI:15740"/>
        <dbReference type="ChEBI" id="CHEBI:16723"/>
        <dbReference type="ChEBI" id="CHEBI:49252"/>
        <dbReference type="EC" id="1.13.11.54"/>
    </reaction>
</comment>
<comment type="cofactor">
    <cofactor evidence="1">
        <name>Fe(2+)</name>
        <dbReference type="ChEBI" id="CHEBI:29033"/>
    </cofactor>
    <text evidence="1">Binds 1 Fe(2+) cation per monomer.</text>
</comment>
<comment type="cofactor">
    <cofactor evidence="1">
        <name>Ni(2+)</name>
        <dbReference type="ChEBI" id="CHEBI:49786"/>
    </cofactor>
    <text evidence="1">Binds 1 nickel ion per monomer.</text>
</comment>
<comment type="pathway">
    <text evidence="1">Amino-acid biosynthesis; L-methionine biosynthesis via salvage pathway; L-methionine from S-methyl-5-thio-alpha-D-ribose 1-phosphate: step 5/6.</text>
</comment>
<comment type="subunit">
    <text evidence="1">Monomer.</text>
</comment>
<comment type="similarity">
    <text evidence="1">Belongs to the acireductone dioxygenase (ARD) family.</text>
</comment>
<gene>
    <name evidence="1" type="primary">mtnD</name>
    <name type="ordered locus">BLi01517</name>
    <name type="ordered locus">BL03542</name>
</gene>